<feature type="chain" id="PRO_1000059517" description="Chaperone protein DnaK">
    <location>
        <begin position="1"/>
        <end position="650"/>
    </location>
</feature>
<feature type="modified residue" description="Phosphothreonine; by autocatalysis" evidence="1">
    <location>
        <position position="200"/>
    </location>
</feature>
<comment type="function">
    <text evidence="1">Acts as a chaperone.</text>
</comment>
<comment type="induction">
    <text evidence="1">By stress conditions e.g. heat shock.</text>
</comment>
<comment type="similarity">
    <text evidence="1">Belongs to the heat shock protein 70 family.</text>
</comment>
<keyword id="KW-0067">ATP-binding</keyword>
<keyword id="KW-0143">Chaperone</keyword>
<keyword id="KW-0547">Nucleotide-binding</keyword>
<keyword id="KW-0597">Phosphoprotein</keyword>
<keyword id="KW-0346">Stress response</keyword>
<organism>
    <name type="scientific">Burkholderia orbicola (strain AU 1054)</name>
    <dbReference type="NCBI Taxonomy" id="331271"/>
    <lineage>
        <taxon>Bacteria</taxon>
        <taxon>Pseudomonadati</taxon>
        <taxon>Pseudomonadota</taxon>
        <taxon>Betaproteobacteria</taxon>
        <taxon>Burkholderiales</taxon>
        <taxon>Burkholderiaceae</taxon>
        <taxon>Burkholderia</taxon>
        <taxon>Burkholderia cepacia complex</taxon>
        <taxon>Burkholderia orbicola</taxon>
    </lineage>
</organism>
<accession>Q1BYX3</accession>
<reference key="1">
    <citation type="submission" date="2006-05" db="EMBL/GenBank/DDBJ databases">
        <title>Complete sequence of chromosome 1 of Burkholderia cenocepacia AU 1054.</title>
        <authorList>
            <consortium name="US DOE Joint Genome Institute"/>
            <person name="Copeland A."/>
            <person name="Lucas S."/>
            <person name="Lapidus A."/>
            <person name="Barry K."/>
            <person name="Detter J.C."/>
            <person name="Glavina del Rio T."/>
            <person name="Hammon N."/>
            <person name="Israni S."/>
            <person name="Dalin E."/>
            <person name="Tice H."/>
            <person name="Pitluck S."/>
            <person name="Chain P."/>
            <person name="Malfatti S."/>
            <person name="Shin M."/>
            <person name="Vergez L."/>
            <person name="Schmutz J."/>
            <person name="Larimer F."/>
            <person name="Land M."/>
            <person name="Hauser L."/>
            <person name="Kyrpides N."/>
            <person name="Lykidis A."/>
            <person name="LiPuma J.J."/>
            <person name="Konstantinidis K."/>
            <person name="Tiedje J.M."/>
            <person name="Richardson P."/>
        </authorList>
    </citation>
    <scope>NUCLEOTIDE SEQUENCE [LARGE SCALE GENOMIC DNA]</scope>
    <source>
        <strain>AU 1054</strain>
    </source>
</reference>
<proteinExistence type="inferred from homology"/>
<name>DNAK_BURO1</name>
<gene>
    <name evidence="1" type="primary">dnaK</name>
    <name type="ordered locus">Bcen_0268</name>
</gene>
<sequence>MGKIIGIDLGTTNSCVAIMEGNQVKVIENSEGTRTTPSIIAYMDDNEVLVGAPAKRQSVTNPKNTLFAVKRLIGRRFEEKEVQKDIGLMPYSIIKADNGDAWVEAHGEKLAPPQVSAEVLRKMKKTAEDYLGEPVTEAVITVPAYFNDSQRQATKDAGRIAGLEVKRIINEPTAAALAFGLDKVEKGDRKIAVYDLGGGTFDVSIIEIADVDGEMQFEVLSTNGDTFLGGEDFDQRIIDYIIGEFKKEQGVDLSKDVLALQRLKEAAEKAKIELSSGQQTEINLPYITADASGPKHLNLKITRAKLEALVEDLVERTIEPCRIAIKDAGVKVSDIDDVILVGGQTRMPKVMEKVKEFFGKDPRRDVNPDEAVAVGAAIQGQVLSGDRKDVLLLDVTPLSLGIETLGGVMTKMINKNTTIPTKHAQVYSTADDNQGAVTIKVFQGEREMAAGNKLLGEFNLEGIPPAPRGVPQIEVTFDIDANGILHVGAKDKATGKENKITIKANSGLSEAEIDQMIKDAEANAAEDHKLRELADSRNQGDALVHSTKKALTEYGDKLDAGEKEAIEASLKSLEEVLKDTSADKAAIDAKVEELGKVSQKLGEKMYADMQAQQAGAAGAAGAAEGAAHAGGAQQAADDVVDAEFKEVKKD</sequence>
<dbReference type="EMBL" id="CP000378">
    <property type="protein sequence ID" value="ABF75182.1"/>
    <property type="molecule type" value="Genomic_DNA"/>
</dbReference>
<dbReference type="SMR" id="Q1BYX3"/>
<dbReference type="HOGENOM" id="CLU_005965_2_1_4"/>
<dbReference type="GO" id="GO:0005524">
    <property type="term" value="F:ATP binding"/>
    <property type="evidence" value="ECO:0007669"/>
    <property type="project" value="UniProtKB-UniRule"/>
</dbReference>
<dbReference type="GO" id="GO:0140662">
    <property type="term" value="F:ATP-dependent protein folding chaperone"/>
    <property type="evidence" value="ECO:0007669"/>
    <property type="project" value="InterPro"/>
</dbReference>
<dbReference type="GO" id="GO:0051082">
    <property type="term" value="F:unfolded protein binding"/>
    <property type="evidence" value="ECO:0007669"/>
    <property type="project" value="InterPro"/>
</dbReference>
<dbReference type="CDD" id="cd10234">
    <property type="entry name" value="ASKHA_NBD_HSP70_DnaK-like"/>
    <property type="match status" value="1"/>
</dbReference>
<dbReference type="FunFam" id="2.60.34.10:FF:000014">
    <property type="entry name" value="Chaperone protein DnaK HSP70"/>
    <property type="match status" value="1"/>
</dbReference>
<dbReference type="FunFam" id="3.30.30.30:FF:000003">
    <property type="entry name" value="Heat shock protein 9"/>
    <property type="match status" value="1"/>
</dbReference>
<dbReference type="FunFam" id="1.20.1270.10:FF:000001">
    <property type="entry name" value="Molecular chaperone DnaK"/>
    <property type="match status" value="1"/>
</dbReference>
<dbReference type="FunFam" id="3.30.420.40:FF:000004">
    <property type="entry name" value="Molecular chaperone DnaK"/>
    <property type="match status" value="1"/>
</dbReference>
<dbReference type="FunFam" id="3.90.640.10:FF:000003">
    <property type="entry name" value="Molecular chaperone DnaK"/>
    <property type="match status" value="1"/>
</dbReference>
<dbReference type="Gene3D" id="1.20.1270.10">
    <property type="match status" value="1"/>
</dbReference>
<dbReference type="Gene3D" id="3.30.420.40">
    <property type="match status" value="2"/>
</dbReference>
<dbReference type="Gene3D" id="3.90.640.10">
    <property type="entry name" value="Actin, Chain A, domain 4"/>
    <property type="match status" value="1"/>
</dbReference>
<dbReference type="Gene3D" id="2.60.34.10">
    <property type="entry name" value="Substrate Binding Domain Of DNAk, Chain A, domain 1"/>
    <property type="match status" value="1"/>
</dbReference>
<dbReference type="HAMAP" id="MF_00332">
    <property type="entry name" value="DnaK"/>
    <property type="match status" value="1"/>
</dbReference>
<dbReference type="InterPro" id="IPR043129">
    <property type="entry name" value="ATPase_NBD"/>
</dbReference>
<dbReference type="InterPro" id="IPR012725">
    <property type="entry name" value="Chaperone_DnaK"/>
</dbReference>
<dbReference type="InterPro" id="IPR018181">
    <property type="entry name" value="Heat_shock_70_CS"/>
</dbReference>
<dbReference type="InterPro" id="IPR029048">
    <property type="entry name" value="HSP70_C_sf"/>
</dbReference>
<dbReference type="InterPro" id="IPR029047">
    <property type="entry name" value="HSP70_peptide-bd_sf"/>
</dbReference>
<dbReference type="InterPro" id="IPR013126">
    <property type="entry name" value="Hsp_70_fam"/>
</dbReference>
<dbReference type="NCBIfam" id="NF001413">
    <property type="entry name" value="PRK00290.1"/>
    <property type="match status" value="1"/>
</dbReference>
<dbReference type="NCBIfam" id="NF003520">
    <property type="entry name" value="PRK05183.1"/>
    <property type="match status" value="1"/>
</dbReference>
<dbReference type="NCBIfam" id="TIGR02350">
    <property type="entry name" value="prok_dnaK"/>
    <property type="match status" value="1"/>
</dbReference>
<dbReference type="PANTHER" id="PTHR19375">
    <property type="entry name" value="HEAT SHOCK PROTEIN 70KDA"/>
    <property type="match status" value="1"/>
</dbReference>
<dbReference type="Pfam" id="PF00012">
    <property type="entry name" value="HSP70"/>
    <property type="match status" value="1"/>
</dbReference>
<dbReference type="PRINTS" id="PR00301">
    <property type="entry name" value="HEATSHOCK70"/>
</dbReference>
<dbReference type="SUPFAM" id="SSF53067">
    <property type="entry name" value="Actin-like ATPase domain"/>
    <property type="match status" value="2"/>
</dbReference>
<dbReference type="SUPFAM" id="SSF100934">
    <property type="entry name" value="Heat shock protein 70kD (HSP70), C-terminal subdomain"/>
    <property type="match status" value="1"/>
</dbReference>
<dbReference type="SUPFAM" id="SSF100920">
    <property type="entry name" value="Heat shock protein 70kD (HSP70), peptide-binding domain"/>
    <property type="match status" value="1"/>
</dbReference>
<dbReference type="PROSITE" id="PS00297">
    <property type="entry name" value="HSP70_1"/>
    <property type="match status" value="1"/>
</dbReference>
<dbReference type="PROSITE" id="PS00329">
    <property type="entry name" value="HSP70_2"/>
    <property type="match status" value="1"/>
</dbReference>
<dbReference type="PROSITE" id="PS01036">
    <property type="entry name" value="HSP70_3"/>
    <property type="match status" value="1"/>
</dbReference>
<evidence type="ECO:0000255" key="1">
    <source>
        <dbReference type="HAMAP-Rule" id="MF_00332"/>
    </source>
</evidence>
<protein>
    <recommendedName>
        <fullName evidence="1">Chaperone protein DnaK</fullName>
    </recommendedName>
    <alternativeName>
        <fullName evidence="1">HSP70</fullName>
    </alternativeName>
    <alternativeName>
        <fullName evidence="1">Heat shock 70 kDa protein</fullName>
    </alternativeName>
    <alternativeName>
        <fullName evidence="1">Heat shock protein 70</fullName>
    </alternativeName>
</protein>